<organism>
    <name type="scientific">Mus musculus</name>
    <name type="common">Mouse</name>
    <dbReference type="NCBI Taxonomy" id="10090"/>
    <lineage>
        <taxon>Eukaryota</taxon>
        <taxon>Metazoa</taxon>
        <taxon>Chordata</taxon>
        <taxon>Craniata</taxon>
        <taxon>Vertebrata</taxon>
        <taxon>Euteleostomi</taxon>
        <taxon>Mammalia</taxon>
        <taxon>Eutheria</taxon>
        <taxon>Euarchontoglires</taxon>
        <taxon>Glires</taxon>
        <taxon>Rodentia</taxon>
        <taxon>Myomorpha</taxon>
        <taxon>Muroidea</taxon>
        <taxon>Muridae</taxon>
        <taxon>Murinae</taxon>
        <taxon>Mus</taxon>
        <taxon>Mus</taxon>
    </lineage>
</organism>
<protein>
    <recommendedName>
        <fullName>Glutamate receptor ionotropic, delta-1</fullName>
        <shortName>GluD1</shortName>
        <shortName>GluR delta-1 subunit</shortName>
    </recommendedName>
</protein>
<sequence>MEALTLWLLPWICQCVTVRADSIIHIGAIFEENAAKDDRVFQLAVSDLSLNDDILQSEKITYSIKVIEANNPFQAVQEACDLMTQGILALVTSTGCASANALQSLTDAMHIPHLFVQRNPGGSPRTACHLNPSPDGEAYTLASRPPVRLNDVMLRLVTELRWQKFVMFYDSEYDIRGLQSFLDQASRLGLDVSLQKVDKNISHVFTSLFTTMKTEELNRYRDTLRRAILLLSPQGAHSFINEAVETNLASKDSHWVFVNEEISDPEILDLVHSALGRMTVVRQIFPSAKDNQKCMRNNHRISSLLCDPQEGYLQMLQISNLYLYDSVLMLANAFHRKLEDRKWHSMASLNCIRKSTKPWNGGRSMLDTIKKGHITGLTGVMEFREDSSNPYVQFEILGTTYSETFGKDMRKLATWDSEKGLNGSLQERPMGSRLQGLTLKVVTVLEEPFVMVAENILGQPKRYKGFSIDVLDALAKALGFKYEIYQAPDGRYGHQLHNTSWNGMIGELISKRADLAISAITITPERESVVDFSKRYMDYSVGILIKKPEEKISIFSLFAPFDFAVWACIAAAIPVVGVLIFVLNRIQAVRSQSATQPRPSASATLHSAIWIVYGAFVQQGGESSVNSVAMRIVMGSWWLFTLIVCSSYTANLAAFLTVSRMDNPIRTFQDLSKQLEMSYGTVRDSAVYEYFRAKGTNPLEQDSTFAELWRTISKNGGADNCVSNPSEGIRKAKKGNYAFLWDVAVVEYAALTDDDCSVTVIGNSISSKGYGIALQHGSPYRDLFSQRILELQDTGDLDVLKQKWWPHTGRCDLTSHSSTQTEGKSLKLHSFAGVFCILAIGLLLACLVAALELWWNSNRCHQETPKEDKEVNLEQVHRRINSLMDEDIAHKQISPASIELSALEMGGLAPSQALEPTREYQNTQLSVSTFLPEQSSHGTSRTLSSGPSSNLPLPLSSSATMPSIQCKHRSPNGGLFRQSPVKTPIPMSFQPVPGGVLPEALDTSHGTSI</sequence>
<reference key="1">
    <citation type="journal article" date="1992" name="Biochem. Biophys. Res. Commun.">
        <title>Molecular cloning of a cDNA encoding a novel member of the mouse glutamate receptor channel family.</title>
        <authorList>
            <person name="Yamazaki M."/>
            <person name="Araki K."/>
            <person name="Shibata A."/>
            <person name="Mishina M."/>
        </authorList>
    </citation>
    <scope>NUCLEOTIDE SEQUENCE [MRNA]</scope>
    <scope>TISSUE SPECIFICITY</scope>
    <source>
        <strain>ICR</strain>
        <tissue>Forebrain</tissue>
    </source>
</reference>
<reference key="2">
    <citation type="journal article" date="2005" name="Science">
        <title>The transcriptional landscape of the mammalian genome.</title>
        <authorList>
            <person name="Carninci P."/>
            <person name="Kasukawa T."/>
            <person name="Katayama S."/>
            <person name="Gough J."/>
            <person name="Frith M.C."/>
            <person name="Maeda N."/>
            <person name="Oyama R."/>
            <person name="Ravasi T."/>
            <person name="Lenhard B."/>
            <person name="Wells C."/>
            <person name="Kodzius R."/>
            <person name="Shimokawa K."/>
            <person name="Bajic V.B."/>
            <person name="Brenner S.E."/>
            <person name="Batalov S."/>
            <person name="Forrest A.R."/>
            <person name="Zavolan M."/>
            <person name="Davis M.J."/>
            <person name="Wilming L.G."/>
            <person name="Aidinis V."/>
            <person name="Allen J.E."/>
            <person name="Ambesi-Impiombato A."/>
            <person name="Apweiler R."/>
            <person name="Aturaliya R.N."/>
            <person name="Bailey T.L."/>
            <person name="Bansal M."/>
            <person name="Baxter L."/>
            <person name="Beisel K.W."/>
            <person name="Bersano T."/>
            <person name="Bono H."/>
            <person name="Chalk A.M."/>
            <person name="Chiu K.P."/>
            <person name="Choudhary V."/>
            <person name="Christoffels A."/>
            <person name="Clutterbuck D.R."/>
            <person name="Crowe M.L."/>
            <person name="Dalla E."/>
            <person name="Dalrymple B.P."/>
            <person name="de Bono B."/>
            <person name="Della Gatta G."/>
            <person name="di Bernardo D."/>
            <person name="Down T."/>
            <person name="Engstrom P."/>
            <person name="Fagiolini M."/>
            <person name="Faulkner G."/>
            <person name="Fletcher C.F."/>
            <person name="Fukushima T."/>
            <person name="Furuno M."/>
            <person name="Futaki S."/>
            <person name="Gariboldi M."/>
            <person name="Georgii-Hemming P."/>
            <person name="Gingeras T.R."/>
            <person name="Gojobori T."/>
            <person name="Green R.E."/>
            <person name="Gustincich S."/>
            <person name="Harbers M."/>
            <person name="Hayashi Y."/>
            <person name="Hensch T.K."/>
            <person name="Hirokawa N."/>
            <person name="Hill D."/>
            <person name="Huminiecki L."/>
            <person name="Iacono M."/>
            <person name="Ikeo K."/>
            <person name="Iwama A."/>
            <person name="Ishikawa T."/>
            <person name="Jakt M."/>
            <person name="Kanapin A."/>
            <person name="Katoh M."/>
            <person name="Kawasawa Y."/>
            <person name="Kelso J."/>
            <person name="Kitamura H."/>
            <person name="Kitano H."/>
            <person name="Kollias G."/>
            <person name="Krishnan S.P."/>
            <person name="Kruger A."/>
            <person name="Kummerfeld S.K."/>
            <person name="Kurochkin I.V."/>
            <person name="Lareau L.F."/>
            <person name="Lazarevic D."/>
            <person name="Lipovich L."/>
            <person name="Liu J."/>
            <person name="Liuni S."/>
            <person name="McWilliam S."/>
            <person name="Madan Babu M."/>
            <person name="Madera M."/>
            <person name="Marchionni L."/>
            <person name="Matsuda H."/>
            <person name="Matsuzawa S."/>
            <person name="Miki H."/>
            <person name="Mignone F."/>
            <person name="Miyake S."/>
            <person name="Morris K."/>
            <person name="Mottagui-Tabar S."/>
            <person name="Mulder N."/>
            <person name="Nakano N."/>
            <person name="Nakauchi H."/>
            <person name="Ng P."/>
            <person name="Nilsson R."/>
            <person name="Nishiguchi S."/>
            <person name="Nishikawa S."/>
            <person name="Nori F."/>
            <person name="Ohara O."/>
            <person name="Okazaki Y."/>
            <person name="Orlando V."/>
            <person name="Pang K.C."/>
            <person name="Pavan W.J."/>
            <person name="Pavesi G."/>
            <person name="Pesole G."/>
            <person name="Petrovsky N."/>
            <person name="Piazza S."/>
            <person name="Reed J."/>
            <person name="Reid J.F."/>
            <person name="Ring B.Z."/>
            <person name="Ringwald M."/>
            <person name="Rost B."/>
            <person name="Ruan Y."/>
            <person name="Salzberg S.L."/>
            <person name="Sandelin A."/>
            <person name="Schneider C."/>
            <person name="Schoenbach C."/>
            <person name="Sekiguchi K."/>
            <person name="Semple C.A."/>
            <person name="Seno S."/>
            <person name="Sessa L."/>
            <person name="Sheng Y."/>
            <person name="Shibata Y."/>
            <person name="Shimada H."/>
            <person name="Shimada K."/>
            <person name="Silva D."/>
            <person name="Sinclair B."/>
            <person name="Sperling S."/>
            <person name="Stupka E."/>
            <person name="Sugiura K."/>
            <person name="Sultana R."/>
            <person name="Takenaka Y."/>
            <person name="Taki K."/>
            <person name="Tammoja K."/>
            <person name="Tan S.L."/>
            <person name="Tang S."/>
            <person name="Taylor M.S."/>
            <person name="Tegner J."/>
            <person name="Teichmann S.A."/>
            <person name="Ueda H.R."/>
            <person name="van Nimwegen E."/>
            <person name="Verardo R."/>
            <person name="Wei C.L."/>
            <person name="Yagi K."/>
            <person name="Yamanishi H."/>
            <person name="Zabarovsky E."/>
            <person name="Zhu S."/>
            <person name="Zimmer A."/>
            <person name="Hide W."/>
            <person name="Bult C."/>
            <person name="Grimmond S.M."/>
            <person name="Teasdale R.D."/>
            <person name="Liu E.T."/>
            <person name="Brusic V."/>
            <person name="Quackenbush J."/>
            <person name="Wahlestedt C."/>
            <person name="Mattick J.S."/>
            <person name="Hume D.A."/>
            <person name="Kai C."/>
            <person name="Sasaki D."/>
            <person name="Tomaru Y."/>
            <person name="Fukuda S."/>
            <person name="Kanamori-Katayama M."/>
            <person name="Suzuki M."/>
            <person name="Aoki J."/>
            <person name="Arakawa T."/>
            <person name="Iida J."/>
            <person name="Imamura K."/>
            <person name="Itoh M."/>
            <person name="Kato T."/>
            <person name="Kawaji H."/>
            <person name="Kawagashira N."/>
            <person name="Kawashima T."/>
            <person name="Kojima M."/>
            <person name="Kondo S."/>
            <person name="Konno H."/>
            <person name="Nakano K."/>
            <person name="Ninomiya N."/>
            <person name="Nishio T."/>
            <person name="Okada M."/>
            <person name="Plessy C."/>
            <person name="Shibata K."/>
            <person name="Shiraki T."/>
            <person name="Suzuki S."/>
            <person name="Tagami M."/>
            <person name="Waki K."/>
            <person name="Watahiki A."/>
            <person name="Okamura-Oho Y."/>
            <person name="Suzuki H."/>
            <person name="Kawai J."/>
            <person name="Hayashizaki Y."/>
        </authorList>
    </citation>
    <scope>NUCLEOTIDE SEQUENCE [LARGE SCALE MRNA]</scope>
    <source>
        <strain>C57BL/6J</strain>
        <tissue>Hypothalamus</tissue>
    </source>
</reference>
<reference key="3">
    <citation type="journal article" date="2009" name="PLoS Biol.">
        <title>Lineage-specific biology revealed by a finished genome assembly of the mouse.</title>
        <authorList>
            <person name="Church D.M."/>
            <person name="Goodstadt L."/>
            <person name="Hillier L.W."/>
            <person name="Zody M.C."/>
            <person name="Goldstein S."/>
            <person name="She X."/>
            <person name="Bult C.J."/>
            <person name="Agarwala R."/>
            <person name="Cherry J.L."/>
            <person name="DiCuccio M."/>
            <person name="Hlavina W."/>
            <person name="Kapustin Y."/>
            <person name="Meric P."/>
            <person name="Maglott D."/>
            <person name="Birtle Z."/>
            <person name="Marques A.C."/>
            <person name="Graves T."/>
            <person name="Zhou S."/>
            <person name="Teague B."/>
            <person name="Potamousis K."/>
            <person name="Churas C."/>
            <person name="Place M."/>
            <person name="Herschleb J."/>
            <person name="Runnheim R."/>
            <person name="Forrest D."/>
            <person name="Amos-Landgraf J."/>
            <person name="Schwartz D.C."/>
            <person name="Cheng Z."/>
            <person name="Lindblad-Toh K."/>
            <person name="Eichler E.E."/>
            <person name="Ponting C.P."/>
        </authorList>
    </citation>
    <scope>NUCLEOTIDE SEQUENCE [LARGE SCALE GENOMIC DNA]</scope>
    <source>
        <strain>C57BL/6J</strain>
    </source>
</reference>
<reference key="4">
    <citation type="submission" date="2005-07" db="EMBL/GenBank/DDBJ databases">
        <authorList>
            <person name="Mural R.J."/>
            <person name="Adams M.D."/>
            <person name="Myers E.W."/>
            <person name="Smith H.O."/>
            <person name="Venter J.C."/>
        </authorList>
    </citation>
    <scope>NUCLEOTIDE SEQUENCE [LARGE SCALE GENOMIC DNA]</scope>
</reference>
<reference key="5">
    <citation type="journal article" date="2010" name="Cell">
        <title>A tissue-specific atlas of mouse protein phosphorylation and expression.</title>
        <authorList>
            <person name="Huttlin E.L."/>
            <person name="Jedrychowski M.P."/>
            <person name="Elias J.E."/>
            <person name="Goswami T."/>
            <person name="Rad R."/>
            <person name="Beausoleil S.A."/>
            <person name="Villen J."/>
            <person name="Haas W."/>
            <person name="Sowa M.E."/>
            <person name="Gygi S.P."/>
        </authorList>
    </citation>
    <scope>IDENTIFICATION BY MASS SPECTROMETRY [LARGE SCALE ANALYSIS]</scope>
    <source>
        <tissue>Brain</tissue>
    </source>
</reference>
<reference key="6">
    <citation type="journal article" date="2012" name="J. Neurochem.">
        <title>The Cbln family of proteins interact with multiple signaling pathways.</title>
        <authorList>
            <person name="Wei P."/>
            <person name="Pattarini R."/>
            <person name="Rong Y."/>
            <person name="Guo H."/>
            <person name="Bansal P.K."/>
            <person name="Kusnoor S.V."/>
            <person name="Deutch A.Y."/>
            <person name="Parris J."/>
            <person name="Morgan J.I."/>
        </authorList>
    </citation>
    <scope>INTERACTION WITH CBLN1 AND CBLN2</scope>
</reference>
<reference key="7">
    <citation type="journal article" date="2018" name="Mol. Psychiatry">
        <title>GluD1, linked to schizophrenia, controls the burst firing of dopamine neurons.</title>
        <authorList>
            <person name="Benamer N."/>
            <person name="Marti F."/>
            <person name="Lujan R."/>
            <person name="Hepp R."/>
            <person name="Aubier T.G."/>
            <person name="Dupin A.A.M."/>
            <person name="Frebourg G."/>
            <person name="Pons S."/>
            <person name="Maskos U."/>
            <person name="Faure P."/>
            <person name="Hay Y.A."/>
            <person name="Lambolez B."/>
            <person name="Tricoire L."/>
        </authorList>
    </citation>
    <scope>FUNCTION</scope>
    <scope>MUTAGENESIS OF VAL-617</scope>
</reference>
<reference key="8">
    <citation type="journal article" date="2021" name="Nature">
        <title>GluD1 is a signal transduction device disguised as an ionotropic receptor.</title>
        <authorList>
            <person name="Dai J."/>
            <person name="Patzke C."/>
            <person name="Liakath-Ali K."/>
            <person name="Seigneur E."/>
            <person name="Suedhof T.C."/>
        </authorList>
    </citation>
    <scope>FUNCTION</scope>
    <scope>INTERACTION WITH CBLN1 AND CBLN2</scope>
    <scope>SUBCELLULAR LOCATION</scope>
    <scope>MUTAGENESIS OF 940-SER--SER-944; SER-944; 968-HIS--THR-983; 968-HIS-ARG-969 AND 1006-GLY--ILE-1009</scope>
</reference>
<reference key="9">
    <citation type="journal article" date="2021" name="Sci. Adv.">
        <title>Delta glutamate receptors are functional glycine- and D-serine-gated cation channels in situ.</title>
        <authorList>
            <person name="Carrillo E."/>
            <person name="Gonzalez C.U."/>
            <person name="Berka V."/>
            <person name="Jayaraman V."/>
        </authorList>
    </citation>
    <scope>FUNCTION</scope>
    <scope>TRANSPORTER ACTIVITY</scope>
</reference>
<reference key="10">
    <citation type="journal article" date="2024" name="Proc. Natl. Acad. Sci. U.S.A.">
        <title>Lack of evidence for direct ligand-gated ion channel activity of GluD receptors.</title>
        <authorList>
            <person name="Itoh M."/>
            <person name="Piot L."/>
            <person name="Mony L."/>
            <person name="Paoletti P."/>
            <person name="Yuzaki M."/>
        </authorList>
    </citation>
    <scope>FUNCTION</scope>
    <scope>CAUTION</scope>
</reference>
<reference key="11">
    <citation type="journal article" date="2016" name="Science">
        <title>Structural basis for integration of GluD receptors within synaptic organizer complexes.</title>
        <authorList>
            <person name="Elegheert J."/>
            <person name="Kakegawa W."/>
            <person name="Clay J.E."/>
            <person name="Shanks N.F."/>
            <person name="Behiels E."/>
            <person name="Matsuda K."/>
            <person name="Kohda K."/>
            <person name="Miura E."/>
            <person name="Rossmann M."/>
            <person name="Mitakidis N."/>
            <person name="Motohashi J."/>
            <person name="Chang V.T."/>
            <person name="Siebold C."/>
            <person name="Greger I.H."/>
            <person name="Nakagawa T."/>
            <person name="Yuzaki M."/>
            <person name="Aricescu A.R."/>
        </authorList>
    </citation>
    <scope>X-RAY CRYSTALLOGRAPHY (2.30 ANGSTROMS) OF 21-436</scope>
    <scope>DISULFIDE BONDS</scope>
    <scope>INTERACTION WITH CBLN1</scope>
    <scope>MUTAGENESIS OF PHE-73</scope>
    <scope>SUBUNIT</scope>
    <scope>SITE</scope>
    <scope>REGION</scope>
</reference>
<comment type="function">
    <text evidence="2 8 9 10 11">Member of the ionotropic glutamate receptor family, which plays a crucial role in synaptic organization and signal transduction in the central nervous system. Although it shares structural features with ionotropic glutamate receptors, does not bind glutamate as a primary ligand. Instead, forms trans-synaptic adhesion complexes with presynaptic neurexins and cerebellins, regulating NMDA and AMPA receptor activity and influencing synaptic plasticity through signal transduction (PubMed:34135511). In the presence of NRX1B-CBLN1, forms cation-selective channels that are proposed to be gated by glycine and D-serine (PubMed:34936451). However, recent research disputes this ligand-gated cation channel activity (PubMed:39052831). Cation-selective ion channel can be triggered by GRM1 in dopaminergic neurons (PubMed:28696429). Also acts as a receptor for GABA, modulating inhibitory synaptic plasticity through non-ionotropic mechanisms (By similarity).</text>
</comment>
<comment type="catalytic activity">
    <reaction evidence="1">
        <text>Ca(2+)(in) = Ca(2+)(out)</text>
        <dbReference type="Rhea" id="RHEA:29671"/>
        <dbReference type="ChEBI" id="CHEBI:29108"/>
    </reaction>
</comment>
<comment type="catalytic activity">
    <reaction evidence="1">
        <text>Na(+)(in) = Na(+)(out)</text>
        <dbReference type="Rhea" id="RHEA:34963"/>
        <dbReference type="ChEBI" id="CHEBI:29101"/>
    </reaction>
</comment>
<comment type="subunit">
    <text evidence="6 7 9">Homodimer (PubMed:27418511). Interacts (via extracellular N-terminal domain) with CBLN1 (via C1q domain), and more weakly with CBLN2; the interactions mediate the trans-synaptic adhesion complexes also with neurexins and are required for ligand-gated cation channel activity (PubMed:22220752, PubMed:27418511).</text>
</comment>
<comment type="subcellular location">
    <subcellularLocation>
        <location evidence="9">Postsynaptic cell membrane</location>
        <topology evidence="3">Multi-pass membrane protein</topology>
    </subcellularLocation>
</comment>
<comment type="tissue specificity">
    <text evidence="5">Equally in forebrain and cerebellum.</text>
</comment>
<comment type="similarity">
    <text evidence="12">Belongs to the glutamate-gated ion channel (TC 1.A.10.1) family. GRID1 subfamily.</text>
</comment>
<comment type="caution">
    <text evidence="10 11">The ligand-gated cation channel activity triggered by glycine and D-serine, first reported in an article, has been a subject of controversy (PubMed:34936451). These findings have been challenged by more recent research (PubMed:39052831).</text>
</comment>
<name>GRID1_MOUSE</name>
<dbReference type="EMBL" id="D10171">
    <property type="protein sequence ID" value="BAA01041.1"/>
    <property type="molecule type" value="mRNA"/>
</dbReference>
<dbReference type="EMBL" id="AK138279">
    <property type="protein sequence ID" value="BAE23610.1"/>
    <property type="molecule type" value="mRNA"/>
</dbReference>
<dbReference type="EMBL" id="AC114572">
    <property type="status" value="NOT_ANNOTATED_CDS"/>
    <property type="molecule type" value="Genomic_DNA"/>
</dbReference>
<dbReference type="EMBL" id="AC154388">
    <property type="status" value="NOT_ANNOTATED_CDS"/>
    <property type="molecule type" value="Genomic_DNA"/>
</dbReference>
<dbReference type="EMBL" id="AC154730">
    <property type="status" value="NOT_ANNOTATED_CDS"/>
    <property type="molecule type" value="Genomic_DNA"/>
</dbReference>
<dbReference type="EMBL" id="AC163280">
    <property type="status" value="NOT_ANNOTATED_CDS"/>
    <property type="molecule type" value="Genomic_DNA"/>
</dbReference>
<dbReference type="EMBL" id="AC169510">
    <property type="status" value="NOT_ANNOTATED_CDS"/>
    <property type="molecule type" value="Genomic_DNA"/>
</dbReference>
<dbReference type="EMBL" id="CT009532">
    <property type="status" value="NOT_ANNOTATED_CDS"/>
    <property type="molecule type" value="Genomic_DNA"/>
</dbReference>
<dbReference type="EMBL" id="CT030647">
    <property type="status" value="NOT_ANNOTATED_CDS"/>
    <property type="molecule type" value="Genomic_DNA"/>
</dbReference>
<dbReference type="EMBL" id="CH466573">
    <property type="protein sequence ID" value="EDL24889.1"/>
    <property type="molecule type" value="Genomic_DNA"/>
</dbReference>
<dbReference type="CCDS" id="CCDS26944.1"/>
<dbReference type="PIR" id="JH0266">
    <property type="entry name" value="JH0266"/>
</dbReference>
<dbReference type="RefSeq" id="NP_032192.2">
    <property type="nucleotide sequence ID" value="NM_008166.2"/>
</dbReference>
<dbReference type="PDB" id="5KC9">
    <property type="method" value="X-ray"/>
    <property type="resolution" value="2.30 A"/>
    <property type="chains" value="A/B/C=21-436"/>
</dbReference>
<dbReference type="PDBsum" id="5KC9"/>
<dbReference type="SMR" id="Q61627"/>
<dbReference type="BioGRID" id="200061">
    <property type="interactions" value="3"/>
</dbReference>
<dbReference type="FunCoup" id="Q61627">
    <property type="interactions" value="643"/>
</dbReference>
<dbReference type="IntAct" id="Q61627">
    <property type="interactions" value="1"/>
</dbReference>
<dbReference type="MINT" id="Q61627"/>
<dbReference type="STRING" id="10090.ENSMUSP00000044009"/>
<dbReference type="GlyConnect" id="2345">
    <property type="glycosylation" value="2 N-Linked glycans (2 sites)"/>
</dbReference>
<dbReference type="GlyCosmos" id="Q61627">
    <property type="glycosylation" value="4 sites, 2 glycans"/>
</dbReference>
<dbReference type="GlyGen" id="Q61627">
    <property type="glycosylation" value="7 sites, 5 N-linked glycans (3 sites), 1 O-linked glycan (3 sites)"/>
</dbReference>
<dbReference type="iPTMnet" id="Q61627"/>
<dbReference type="PhosphoSitePlus" id="Q61627"/>
<dbReference type="SwissPalm" id="Q61627"/>
<dbReference type="jPOST" id="Q61627"/>
<dbReference type="PaxDb" id="10090-ENSMUSP00000044009"/>
<dbReference type="PeptideAtlas" id="Q61627"/>
<dbReference type="ProteomicsDB" id="271164"/>
<dbReference type="Antibodypedia" id="30060">
    <property type="antibodies" value="241 antibodies from 29 providers"/>
</dbReference>
<dbReference type="DNASU" id="14803"/>
<dbReference type="Ensembl" id="ENSMUST00000043349.7">
    <property type="protein sequence ID" value="ENSMUSP00000044009.6"/>
    <property type="gene ID" value="ENSMUSG00000041078.8"/>
</dbReference>
<dbReference type="GeneID" id="14803"/>
<dbReference type="KEGG" id="mmu:14803"/>
<dbReference type="UCSC" id="uc007tbj.1">
    <property type="organism name" value="mouse"/>
</dbReference>
<dbReference type="AGR" id="MGI:95812"/>
<dbReference type="CTD" id="2894"/>
<dbReference type="MGI" id="MGI:95812">
    <property type="gene designation" value="Grid1"/>
</dbReference>
<dbReference type="VEuPathDB" id="HostDB:ENSMUSG00000041078"/>
<dbReference type="eggNOG" id="KOG1052">
    <property type="taxonomic scope" value="Eukaryota"/>
</dbReference>
<dbReference type="GeneTree" id="ENSGT00940000155910"/>
<dbReference type="HOGENOM" id="CLU_007257_9_0_1"/>
<dbReference type="InParanoid" id="Q61627"/>
<dbReference type="OMA" id="QIFPLAR"/>
<dbReference type="OrthoDB" id="5984008at2759"/>
<dbReference type="PhylomeDB" id="Q61627"/>
<dbReference type="TreeFam" id="TF352434"/>
<dbReference type="BioGRID-ORCS" id="14803">
    <property type="hits" value="1 hit in 77 CRISPR screens"/>
</dbReference>
<dbReference type="ChiTaRS" id="Grid1">
    <property type="organism name" value="mouse"/>
</dbReference>
<dbReference type="PRO" id="PR:Q61627"/>
<dbReference type="Proteomes" id="UP000000589">
    <property type="component" value="Chromosome 14"/>
</dbReference>
<dbReference type="RNAct" id="Q61627">
    <property type="molecule type" value="protein"/>
</dbReference>
<dbReference type="Bgee" id="ENSMUSG00000041078">
    <property type="expression patterns" value="Expressed in CA1 field of hippocampus and 96 other cell types or tissues"/>
</dbReference>
<dbReference type="GO" id="GO:0098982">
    <property type="term" value="C:GABA-ergic synapse"/>
    <property type="evidence" value="ECO:0000314"/>
    <property type="project" value="SynGO"/>
</dbReference>
<dbReference type="GO" id="GO:0098978">
    <property type="term" value="C:glutamatergic synapse"/>
    <property type="evidence" value="ECO:0000314"/>
    <property type="project" value="SynGO"/>
</dbReference>
<dbReference type="GO" id="GO:0098839">
    <property type="term" value="C:postsynaptic density membrane"/>
    <property type="evidence" value="ECO:0000314"/>
    <property type="project" value="UniProt"/>
</dbReference>
<dbReference type="GO" id="GO:0045211">
    <property type="term" value="C:postsynaptic membrane"/>
    <property type="evidence" value="ECO:0000314"/>
    <property type="project" value="UniProt"/>
</dbReference>
<dbReference type="GO" id="GO:0098820">
    <property type="term" value="C:trans-synaptic protein complex"/>
    <property type="evidence" value="ECO:0000314"/>
    <property type="project" value="UniProt"/>
</dbReference>
<dbReference type="GO" id="GO:0099530">
    <property type="term" value="F:G protein-coupled receptor activity involved in regulation of postsynaptic membrane potential"/>
    <property type="evidence" value="ECO:0007669"/>
    <property type="project" value="Ensembl"/>
</dbReference>
<dbReference type="GO" id="GO:0016917">
    <property type="term" value="F:GABA receptor activity"/>
    <property type="evidence" value="ECO:0007669"/>
    <property type="project" value="Ensembl"/>
</dbReference>
<dbReference type="GO" id="GO:0042802">
    <property type="term" value="F:identical protein binding"/>
    <property type="evidence" value="ECO:0007669"/>
    <property type="project" value="Ensembl"/>
</dbReference>
<dbReference type="GO" id="GO:0046872">
    <property type="term" value="F:metal ion binding"/>
    <property type="evidence" value="ECO:0007669"/>
    <property type="project" value="UniProtKB-KW"/>
</dbReference>
<dbReference type="GO" id="GO:1904315">
    <property type="term" value="F:transmitter-gated monoatomic ion channel activity involved in regulation of postsynaptic membrane potential"/>
    <property type="evidence" value="ECO:0000314"/>
    <property type="project" value="UniProt"/>
</dbReference>
<dbReference type="GO" id="GO:0031914">
    <property type="term" value="P:negative regulation of synaptic plasticity"/>
    <property type="evidence" value="ECO:0007669"/>
    <property type="project" value="Ensembl"/>
</dbReference>
<dbReference type="GO" id="GO:0007200">
    <property type="term" value="P:phospholipase C-activating G protein-coupled receptor signaling pathway"/>
    <property type="evidence" value="ECO:0007669"/>
    <property type="project" value="Ensembl"/>
</dbReference>
<dbReference type="GO" id="GO:0099175">
    <property type="term" value="P:regulation of postsynapse organization"/>
    <property type="evidence" value="ECO:0000314"/>
    <property type="project" value="SynGO"/>
</dbReference>
<dbReference type="GO" id="GO:0099072">
    <property type="term" value="P:regulation of postsynaptic membrane neurotransmitter receptor levels"/>
    <property type="evidence" value="ECO:0000314"/>
    <property type="project" value="SynGO"/>
</dbReference>
<dbReference type="GO" id="GO:0035176">
    <property type="term" value="P:social behavior"/>
    <property type="evidence" value="ECO:0000315"/>
    <property type="project" value="UniProtKB"/>
</dbReference>
<dbReference type="GO" id="GO:0099538">
    <property type="term" value="P:synaptic signaling via neuropeptide"/>
    <property type="evidence" value="ECO:0000314"/>
    <property type="project" value="UniProt"/>
</dbReference>
<dbReference type="CDD" id="cd06392">
    <property type="entry name" value="PBP1_iGluR_delta_1"/>
    <property type="match status" value="1"/>
</dbReference>
<dbReference type="CDD" id="cd13730">
    <property type="entry name" value="PBP2_iGluR_delta_1"/>
    <property type="match status" value="1"/>
</dbReference>
<dbReference type="FunFam" id="3.40.50.2300:FF:001145">
    <property type="match status" value="1"/>
</dbReference>
<dbReference type="FunFam" id="3.40.50.2300:FF:000520">
    <property type="entry name" value="Glutamate ionotropic receptor delta type subunit 1"/>
    <property type="match status" value="1"/>
</dbReference>
<dbReference type="FunFam" id="3.40.190.10:FF:000024">
    <property type="entry name" value="Glutamate receptor, ionotropic, delta 1"/>
    <property type="match status" value="1"/>
</dbReference>
<dbReference type="FunFam" id="3.40.50.2300:FF:000220">
    <property type="entry name" value="Glutamate receptor, ionotropic, delta 1"/>
    <property type="match status" value="1"/>
</dbReference>
<dbReference type="FunFam" id="1.10.287.70:FF:000045">
    <property type="entry name" value="Glutamate receptor, ionotropic, delta 2"/>
    <property type="match status" value="1"/>
</dbReference>
<dbReference type="FunFam" id="3.40.190.10:FF:000040">
    <property type="entry name" value="Glutamate receptor, ionotropic, delta 2"/>
    <property type="match status" value="1"/>
</dbReference>
<dbReference type="Gene3D" id="1.10.287.70">
    <property type="match status" value="1"/>
</dbReference>
<dbReference type="Gene3D" id="3.40.50.2300">
    <property type="match status" value="2"/>
</dbReference>
<dbReference type="Gene3D" id="3.40.190.10">
    <property type="entry name" value="Periplasmic binding protein-like II"/>
    <property type="match status" value="2"/>
</dbReference>
<dbReference type="InterPro" id="IPR001828">
    <property type="entry name" value="ANF_lig-bd_rcpt"/>
</dbReference>
<dbReference type="InterPro" id="IPR019594">
    <property type="entry name" value="Glu/Gly-bd"/>
</dbReference>
<dbReference type="InterPro" id="IPR001508">
    <property type="entry name" value="Iono_Glu_rcpt_met"/>
</dbReference>
<dbReference type="InterPro" id="IPR015683">
    <property type="entry name" value="Ionotropic_Glu_rcpt"/>
</dbReference>
<dbReference type="InterPro" id="IPR001320">
    <property type="entry name" value="Iontro_rcpt_C"/>
</dbReference>
<dbReference type="InterPro" id="IPR028082">
    <property type="entry name" value="Peripla_BP_I"/>
</dbReference>
<dbReference type="PANTHER" id="PTHR18966">
    <property type="entry name" value="IONOTROPIC GLUTAMATE RECEPTOR"/>
    <property type="match status" value="1"/>
</dbReference>
<dbReference type="Pfam" id="PF01094">
    <property type="entry name" value="ANF_receptor"/>
    <property type="match status" value="1"/>
</dbReference>
<dbReference type="Pfam" id="PF00060">
    <property type="entry name" value="Lig_chan"/>
    <property type="match status" value="1"/>
</dbReference>
<dbReference type="Pfam" id="PF10613">
    <property type="entry name" value="Lig_chan-Glu_bd"/>
    <property type="match status" value="1"/>
</dbReference>
<dbReference type="PRINTS" id="PR00177">
    <property type="entry name" value="NMDARECEPTOR"/>
</dbReference>
<dbReference type="SMART" id="SM00918">
    <property type="entry name" value="Lig_chan-Glu_bd"/>
    <property type="match status" value="1"/>
</dbReference>
<dbReference type="SMART" id="SM00079">
    <property type="entry name" value="PBPe"/>
    <property type="match status" value="1"/>
</dbReference>
<dbReference type="SUPFAM" id="SSF53822">
    <property type="entry name" value="Periplasmic binding protein-like I"/>
    <property type="match status" value="1"/>
</dbReference>
<dbReference type="SUPFAM" id="SSF53850">
    <property type="entry name" value="Periplasmic binding protein-like II"/>
    <property type="match status" value="1"/>
</dbReference>
<evidence type="ECO:0000250" key="1">
    <source>
        <dbReference type="UniProtKB" id="O43424"/>
    </source>
</evidence>
<evidence type="ECO:0000250" key="2">
    <source>
        <dbReference type="UniProtKB" id="Q9ULK0"/>
    </source>
</evidence>
<evidence type="ECO:0000255" key="3"/>
<evidence type="ECO:0000256" key="4">
    <source>
        <dbReference type="SAM" id="MobiDB-lite"/>
    </source>
</evidence>
<evidence type="ECO:0000269" key="5">
    <source>
    </source>
</evidence>
<evidence type="ECO:0000269" key="6">
    <source>
    </source>
</evidence>
<evidence type="ECO:0000269" key="7">
    <source>
    </source>
</evidence>
<evidence type="ECO:0000269" key="8">
    <source>
    </source>
</evidence>
<evidence type="ECO:0000269" key="9">
    <source>
    </source>
</evidence>
<evidence type="ECO:0000269" key="10">
    <source>
    </source>
</evidence>
<evidence type="ECO:0000269" key="11">
    <source>
    </source>
</evidence>
<evidence type="ECO:0000305" key="12"/>
<evidence type="ECO:0007744" key="13">
    <source>
        <dbReference type="PDB" id="5KC9"/>
    </source>
</evidence>
<evidence type="ECO:0007829" key="14">
    <source>
        <dbReference type="PDB" id="5KC9"/>
    </source>
</evidence>
<proteinExistence type="evidence at protein level"/>
<accession>Q61627</accession>
<accession>Q3UUL5</accession>
<feature type="signal peptide" evidence="3">
    <location>
        <begin position="1"/>
        <end position="20"/>
    </location>
</feature>
<feature type="chain" id="PRO_0000011562" description="Glutamate receptor ionotropic, delta-1">
    <location>
        <begin position="21"/>
        <end position="1009"/>
    </location>
</feature>
<feature type="topological domain" description="Extracellular" evidence="3">
    <location>
        <begin position="21"/>
        <end position="562"/>
    </location>
</feature>
<feature type="transmembrane region" description="Helical" evidence="3">
    <location>
        <begin position="563"/>
        <end position="583"/>
    </location>
</feature>
<feature type="topological domain" description="Cytoplasmic" evidence="3">
    <location>
        <begin position="584"/>
        <end position="637"/>
    </location>
</feature>
<feature type="transmembrane region" description="Helical" evidence="3">
    <location>
        <begin position="638"/>
        <end position="658"/>
    </location>
</feature>
<feature type="topological domain" description="Extracellular" evidence="3">
    <location>
        <begin position="659"/>
        <end position="830"/>
    </location>
</feature>
<feature type="transmembrane region" description="Helical" evidence="3">
    <location>
        <begin position="831"/>
        <end position="851"/>
    </location>
</feature>
<feature type="topological domain" description="Cytoplasmic" evidence="3">
    <location>
        <begin position="852"/>
        <end position="1009"/>
    </location>
</feature>
<feature type="region of interest" description="Interaction with CBLN1" evidence="7">
    <location>
        <begin position="21"/>
        <end position="436"/>
    </location>
</feature>
<feature type="region of interest" description="Disordered" evidence="4">
    <location>
        <begin position="931"/>
        <end position="960"/>
    </location>
</feature>
<feature type="compositionally biased region" description="Polar residues" evidence="4">
    <location>
        <begin position="931"/>
        <end position="942"/>
    </location>
</feature>
<feature type="compositionally biased region" description="Low complexity" evidence="4">
    <location>
        <begin position="943"/>
        <end position="958"/>
    </location>
</feature>
<feature type="binding site" evidence="2">
    <location>
        <position position="527"/>
    </location>
    <ligand>
        <name>Ca(2+)</name>
        <dbReference type="ChEBI" id="CHEBI:29108"/>
        <label>1</label>
    </ligand>
</feature>
<feature type="binding site" evidence="2">
    <location>
        <position position="530"/>
    </location>
    <ligand>
        <name>Ca(2+)</name>
        <dbReference type="ChEBI" id="CHEBI:29108"/>
        <label>1</label>
    </ligand>
</feature>
<feature type="binding site" evidence="2">
    <location>
        <position position="531"/>
    </location>
    <ligand>
        <name>Ca(2+)</name>
        <dbReference type="ChEBI" id="CHEBI:29108"/>
        <label>1</label>
    </ligand>
</feature>
<feature type="binding site" evidence="2">
    <location>
        <position position="753"/>
    </location>
    <ligand>
        <name>Ca(2+)</name>
        <dbReference type="ChEBI" id="CHEBI:29108"/>
        <label>2</label>
    </ligand>
</feature>
<feature type="binding site" evidence="2">
    <location>
        <position position="755"/>
    </location>
    <ligand>
        <name>Ca(2+)</name>
        <dbReference type="ChEBI" id="CHEBI:29108"/>
        <label>2</label>
    </ligand>
</feature>
<feature type="binding site" evidence="2">
    <location>
        <position position="757"/>
    </location>
    <ligand>
        <name>Ca(2+)</name>
        <dbReference type="ChEBI" id="CHEBI:29108"/>
        <label>2</label>
    </ligand>
</feature>
<feature type="site" description="Essential for dimerization" evidence="7">
    <location>
        <position position="73"/>
    </location>
</feature>
<feature type="glycosylation site" description="N-linked (GlcNAc...) asparagine" evidence="3">
    <location>
        <position position="131"/>
    </location>
</feature>
<feature type="glycosylation site" description="N-linked (GlcNAc...) asparagine" evidence="3">
    <location>
        <position position="200"/>
    </location>
</feature>
<feature type="glycosylation site" description="N-linked (GlcNAc...) asparagine" evidence="3">
    <location>
        <position position="422"/>
    </location>
</feature>
<feature type="glycosylation site" description="N-linked (GlcNAc...) asparagine" evidence="2">
    <location>
        <position position="498"/>
    </location>
</feature>
<feature type="disulfide bond" evidence="7 13">
    <location>
        <begin position="80"/>
        <end position="351"/>
    </location>
</feature>
<feature type="disulfide bond" evidence="7 13">
    <location>
        <begin position="96"/>
        <end position="128"/>
    </location>
</feature>
<feature type="disulfide bond" evidence="7 13">
    <location>
        <begin position="294"/>
        <end position="306"/>
    </location>
</feature>
<feature type="mutagenesis site" description="Abolishes dimerization. Weakly interacts with C1q domain of CBLN1." evidence="7">
    <original>F</original>
    <variation>D</variation>
    <location>
        <position position="73"/>
    </location>
</feature>
<feature type="mutagenesis site" description="Loss of cation channel activity." evidence="8">
    <original>V</original>
    <variation>R</variation>
    <location>
        <position position="617"/>
    </location>
</feature>
<feature type="mutagenesis site" description="Impairs regulation of NMDAR postsynaptic response." evidence="9">
    <original>SRTLS</original>
    <variation>GQGHG</variation>
    <location>
        <begin position="940"/>
        <end position="944"/>
    </location>
</feature>
<feature type="mutagenesis site" description="Impairs regulation of NMDAR postsynaptic response." evidence="9">
    <original>S</original>
    <variation>A</variation>
    <location>
        <position position="944"/>
    </location>
</feature>
<feature type="mutagenesis site" description="Impairs regulation of AMPAR postsynaptic response." evidence="9">
    <original>HRSPNGGLFRQSPVKT</original>
    <variation>GQGHG</variation>
    <location>
        <begin position="968"/>
        <end position="983"/>
    </location>
</feature>
<feature type="mutagenesis site" description="Impairs regulation of AMPAR postsynaptic response." evidence="9">
    <original>HR</original>
    <variation>AA</variation>
    <location>
        <begin position="968"/>
        <end position="969"/>
    </location>
</feature>
<feature type="mutagenesis site" description="No effect on regulation of AMPAR or NMDAR postsynaptic responses." evidence="9">
    <original>GTSI</original>
    <variation>EYYV</variation>
    <location>
        <begin position="1006"/>
        <end position="1009"/>
    </location>
</feature>
<feature type="sequence conflict" description="In Ref. 1; BAA01041." evidence="12" ref="1">
    <original>L</original>
    <variation>F</variation>
    <location>
        <position position="178"/>
    </location>
</feature>
<feature type="strand" evidence="14">
    <location>
        <begin position="23"/>
        <end position="33"/>
    </location>
</feature>
<feature type="helix" evidence="14">
    <location>
        <begin position="35"/>
        <end position="51"/>
    </location>
</feature>
<feature type="strand" evidence="14">
    <location>
        <begin position="53"/>
        <end position="55"/>
    </location>
</feature>
<feature type="strand" evidence="14">
    <location>
        <begin position="59"/>
        <end position="67"/>
    </location>
</feature>
<feature type="helix" evidence="14">
    <location>
        <begin position="72"/>
        <end position="84"/>
    </location>
</feature>
<feature type="strand" evidence="14">
    <location>
        <begin position="90"/>
        <end position="93"/>
    </location>
</feature>
<feature type="helix" evidence="14">
    <location>
        <begin position="96"/>
        <end position="109"/>
    </location>
</feature>
<feature type="strand" evidence="14">
    <location>
        <begin position="113"/>
        <end position="115"/>
    </location>
</feature>
<feature type="strand" evidence="14">
    <location>
        <begin position="140"/>
        <end position="142"/>
    </location>
</feature>
<feature type="helix" evidence="14">
    <location>
        <begin position="149"/>
        <end position="159"/>
    </location>
</feature>
<feature type="strand" evidence="14">
    <location>
        <begin position="163"/>
        <end position="169"/>
    </location>
</feature>
<feature type="helix" evidence="14">
    <location>
        <begin position="175"/>
        <end position="178"/>
    </location>
</feature>
<feature type="helix" evidence="14">
    <location>
        <begin position="179"/>
        <end position="187"/>
    </location>
</feature>
<feature type="strand" evidence="14">
    <location>
        <begin position="191"/>
        <end position="196"/>
    </location>
</feature>
<feature type="helix" evidence="14">
    <location>
        <begin position="201"/>
        <end position="211"/>
    </location>
</feature>
<feature type="helix" evidence="14">
    <location>
        <begin position="214"/>
        <end position="223"/>
    </location>
</feature>
<feature type="strand" evidence="14">
    <location>
        <begin position="226"/>
        <end position="231"/>
    </location>
</feature>
<feature type="helix" evidence="14">
    <location>
        <begin position="233"/>
        <end position="245"/>
    </location>
</feature>
<feature type="strand" evidence="14">
    <location>
        <begin position="254"/>
        <end position="258"/>
    </location>
</feature>
<feature type="helix" evidence="14">
    <location>
        <begin position="264"/>
        <end position="273"/>
    </location>
</feature>
<feature type="strand" evidence="14">
    <location>
        <begin position="275"/>
        <end position="283"/>
    </location>
</feature>
<feature type="turn" evidence="14">
    <location>
        <begin position="291"/>
        <end position="294"/>
    </location>
</feature>
<feature type="turn" evidence="14">
    <location>
        <begin position="304"/>
        <end position="306"/>
    </location>
</feature>
<feature type="turn" evidence="14">
    <location>
        <begin position="310"/>
        <end position="312"/>
    </location>
</feature>
<feature type="helix" evidence="14">
    <location>
        <begin position="313"/>
        <end position="315"/>
    </location>
</feature>
<feature type="helix" evidence="14">
    <location>
        <begin position="318"/>
        <end position="339"/>
    </location>
</feature>
<feature type="strand" evidence="14">
    <location>
        <begin position="351"/>
        <end position="353"/>
    </location>
</feature>
<feature type="helix" evidence="14">
    <location>
        <begin position="362"/>
        <end position="370"/>
    </location>
</feature>
<feature type="strand" evidence="14">
    <location>
        <begin position="373"/>
        <end position="376"/>
    </location>
</feature>
<feature type="strand" evidence="14">
    <location>
        <begin position="379"/>
        <end position="382"/>
    </location>
</feature>
<feature type="strand" evidence="14">
    <location>
        <begin position="393"/>
        <end position="402"/>
    </location>
</feature>
<feature type="turn" evidence="14">
    <location>
        <begin position="403"/>
        <end position="405"/>
    </location>
</feature>
<feature type="strand" evidence="14">
    <location>
        <begin position="406"/>
        <end position="416"/>
    </location>
</feature>
<feature type="turn" evidence="14">
    <location>
        <begin position="417"/>
        <end position="419"/>
    </location>
</feature>
<feature type="strand" evidence="14">
    <location>
        <begin position="420"/>
        <end position="423"/>
    </location>
</feature>
<gene>
    <name type="primary">Grid1</name>
</gene>
<keyword id="KW-0002">3D-structure</keyword>
<keyword id="KW-0106">Calcium</keyword>
<keyword id="KW-1003">Cell membrane</keyword>
<keyword id="KW-1015">Disulfide bond</keyword>
<keyword id="KW-0325">Glycoprotein</keyword>
<keyword id="KW-0407">Ion channel</keyword>
<keyword id="KW-0406">Ion transport</keyword>
<keyword id="KW-1071">Ligand-gated ion channel</keyword>
<keyword id="KW-0472">Membrane</keyword>
<keyword id="KW-0479">Metal-binding</keyword>
<keyword id="KW-0628">Postsynaptic cell membrane</keyword>
<keyword id="KW-0675">Receptor</keyword>
<keyword id="KW-1185">Reference proteome</keyword>
<keyword id="KW-0732">Signal</keyword>
<keyword id="KW-0770">Synapse</keyword>
<keyword id="KW-0812">Transmembrane</keyword>
<keyword id="KW-1133">Transmembrane helix</keyword>
<keyword id="KW-0813">Transport</keyword>